<organismHost>
    <name type="scientific">Carica papaya</name>
    <name type="common">Papaya</name>
    <dbReference type="NCBI Taxonomy" id="3649"/>
</organismHost>
<organismHost>
    <name type="scientific">Ullucus tuberosus</name>
    <name type="common">Olluco</name>
    <dbReference type="NCBI Taxonomy" id="108055"/>
</organismHost>
<name>TGB2_PMV</name>
<proteinExistence type="inferred from homology"/>
<gene>
    <name type="ORF">ORF3</name>
</gene>
<reference key="1">
    <citation type="journal article" date="1989" name="J. Gen. Virol.">
        <title>Nucleotide sequence of papaya mosaic virus RNA.</title>
        <authorList>
            <person name="Sit T.L."/>
            <person name="Abouhaidar M.G."/>
            <person name="Holy S."/>
        </authorList>
    </citation>
    <scope>NUCLEOTIDE SEQUENCE [GENOMIC RNA]</scope>
</reference>
<reference key="2">
    <citation type="journal article" date="2005" name="Mol. Plant Microbe Interact.">
        <title>A new cell-to-cell transport model for Potexviruses.</title>
        <authorList>
            <person name="Verchot-Lubicz J."/>
        </authorList>
    </citation>
    <scope>REVIEW</scope>
</reference>
<organism>
    <name type="scientific">Papaya mosaic potexvirus</name>
    <name type="common">PMV</name>
    <dbReference type="NCBI Taxonomy" id="12181"/>
    <lineage>
        <taxon>Viruses</taxon>
        <taxon>Riboviria</taxon>
        <taxon>Orthornavirae</taxon>
        <taxon>Kitrinoviricota</taxon>
        <taxon>Alsuviricetes</taxon>
        <taxon>Tymovirales</taxon>
        <taxon>Alphaflexiviridae</taxon>
        <taxon>Potexvirus</taxon>
    </lineage>
</organism>
<feature type="chain" id="PRO_0000222587" description="Movement protein TGB2">
    <location>
        <begin position="1"/>
        <end position="111"/>
    </location>
</feature>
<feature type="topological domain" description="Cytoplasmic" evidence="1">
    <location>
        <begin position="1"/>
        <end position="16"/>
    </location>
</feature>
<feature type="transmembrane region" description="Helical" evidence="2">
    <location>
        <begin position="17"/>
        <end position="37"/>
    </location>
</feature>
<feature type="topological domain" description="Lumenal" evidence="1">
    <location>
        <begin position="38"/>
        <end position="72"/>
    </location>
</feature>
<feature type="transmembrane region" description="Helical" evidence="2">
    <location>
        <begin position="73"/>
        <end position="93"/>
    </location>
</feature>
<feature type="topological domain" description="Cytoplasmic" evidence="1">
    <location>
        <begin position="94"/>
        <end position="111"/>
    </location>
</feature>
<evidence type="ECO:0000250" key="1"/>
<evidence type="ECO:0000255" key="2"/>
<evidence type="ECO:0000305" key="3"/>
<protein>
    <recommendedName>
        <fullName>Movement protein TGB2</fullName>
    </recommendedName>
    <alternativeName>
        <fullName>12 kDa protein</fullName>
    </alternativeName>
    <alternativeName>
        <fullName>Triple gene block 2 protein</fullName>
        <shortName>TGBp2</shortName>
    </alternativeName>
</protein>
<accession>P20953</accession>
<keyword id="KW-1038">Host endoplasmic reticulum</keyword>
<keyword id="KW-1043">Host membrane</keyword>
<keyword id="KW-0472">Membrane</keyword>
<keyword id="KW-1185">Reference proteome</keyword>
<keyword id="KW-0812">Transmembrane</keyword>
<keyword id="KW-1133">Transmembrane helix</keyword>
<keyword id="KW-0813">Transport</keyword>
<keyword id="KW-0916">Viral movement protein</keyword>
<sequence>MSSHQNFLTPPPDHSKAILAVAVGVGLAIVLHFSLSYKLPSPGDNIHSLPFGGTYRDGTKSIIYNSPHRGPGQSGALPIITVFAIIECTLHVLRKRDNPVRPQHSDCPNCS</sequence>
<comment type="function">
    <text evidence="1">Plays a role in viral cell-to-cell propagation, by facilitating genome transport to neighboring plant cells through plasmosdesmata,.</text>
</comment>
<comment type="subcellular location">
    <subcellularLocation>
        <location evidence="1">Host endoplasmic reticulum membrane</location>
    </subcellularLocation>
</comment>
<comment type="miscellaneous">
    <text>TGBp1, TGBp2 and TGBp3 seem to act together for cell-to-cell propagation. TGBp1 is the main movement protein that physically cross the plasmodesma with the viral genome. TGBp2 and TGBp3 would facilitate TGBp1 function.</text>
</comment>
<comment type="similarity">
    <text evidence="3">Belongs to the Tymovirales TGBp2 protein family.</text>
</comment>
<dbReference type="EMBL" id="D13957">
    <property type="protein sequence ID" value="BAA03052.1"/>
    <property type="molecule type" value="Genomic_RNA"/>
</dbReference>
<dbReference type="PIR" id="JQ0098">
    <property type="entry name" value="JQ0098"/>
</dbReference>
<dbReference type="RefSeq" id="NP_044332.1">
    <property type="nucleotide sequence ID" value="NC_001748.1"/>
</dbReference>
<dbReference type="KEGG" id="vg:1494023"/>
<dbReference type="OrthoDB" id="20634at10239"/>
<dbReference type="Proteomes" id="UP000000477">
    <property type="component" value="Genome"/>
</dbReference>
<dbReference type="GO" id="GO:0044167">
    <property type="term" value="C:host cell endoplasmic reticulum membrane"/>
    <property type="evidence" value="ECO:0007669"/>
    <property type="project" value="UniProtKB-SubCell"/>
</dbReference>
<dbReference type="GO" id="GO:0016020">
    <property type="term" value="C:membrane"/>
    <property type="evidence" value="ECO:0007669"/>
    <property type="project" value="UniProtKB-KW"/>
</dbReference>
<dbReference type="GO" id="GO:0046740">
    <property type="term" value="P:transport of virus in host, cell to cell"/>
    <property type="evidence" value="ECO:0007669"/>
    <property type="project" value="UniProtKB-KW"/>
</dbReference>
<dbReference type="InterPro" id="IPR001896">
    <property type="entry name" value="Plant_vir_prot"/>
</dbReference>
<dbReference type="Pfam" id="PF01307">
    <property type="entry name" value="Plant_vir_prot"/>
    <property type="match status" value="1"/>
</dbReference>